<organism>
    <name type="scientific">Streptococcus pyogenes serotype M1</name>
    <dbReference type="NCBI Taxonomy" id="301447"/>
    <lineage>
        <taxon>Bacteria</taxon>
        <taxon>Bacillati</taxon>
        <taxon>Bacillota</taxon>
        <taxon>Bacilli</taxon>
        <taxon>Lactobacillales</taxon>
        <taxon>Streptococcaceae</taxon>
        <taxon>Streptococcus</taxon>
    </lineage>
</organism>
<comment type="function">
    <text evidence="1">May bind long-chain fatty acids, such as palmitate, and may play a role in lipid transport or fatty acid metabolism.</text>
</comment>
<reference key="1">
    <citation type="journal article" date="2001" name="Proc. Natl. Acad. Sci. U.S.A.">
        <title>Complete genome sequence of an M1 strain of Streptococcus pyogenes.</title>
        <authorList>
            <person name="Ferretti J.J."/>
            <person name="McShan W.M."/>
            <person name="Ajdic D.J."/>
            <person name="Savic D.J."/>
            <person name="Savic G."/>
            <person name="Lyon K."/>
            <person name="Primeaux C."/>
            <person name="Sezate S."/>
            <person name="Suvorov A.N."/>
            <person name="Kenton S."/>
            <person name="Lai H.S."/>
            <person name="Lin S.P."/>
            <person name="Qian Y."/>
            <person name="Jia H.G."/>
            <person name="Najar F.Z."/>
            <person name="Ren Q."/>
            <person name="Zhu H."/>
            <person name="Song L."/>
            <person name="White J."/>
            <person name="Yuan X."/>
            <person name="Clifton S.W."/>
            <person name="Roe B.A."/>
            <person name="McLaughlin R.E."/>
        </authorList>
    </citation>
    <scope>NUCLEOTIDE SEQUENCE [LARGE SCALE GENOMIC DNA]</scope>
    <source>
        <strain>ATCC 700294 / SF370 / Serotype M1</strain>
    </source>
</reference>
<reference key="2">
    <citation type="journal article" date="2005" name="J. Infect. Dis.">
        <title>Evolutionary origin and emergence of a highly successful clone of serotype M1 group A Streptococcus involved multiple horizontal gene transfer events.</title>
        <authorList>
            <person name="Sumby P."/>
            <person name="Porcella S.F."/>
            <person name="Madrigal A.G."/>
            <person name="Barbian K.D."/>
            <person name="Virtaneva K."/>
            <person name="Ricklefs S.M."/>
            <person name="Sturdevant D.E."/>
            <person name="Graham M.R."/>
            <person name="Vuopio-Varkila J."/>
            <person name="Hoe N.P."/>
            <person name="Musser J.M."/>
        </authorList>
    </citation>
    <scope>NUCLEOTIDE SEQUENCE [LARGE SCALE GENOMIC DNA]</scope>
    <source>
        <strain>ATCC BAA-947 / MGAS5005 / Serotype M1</strain>
    </source>
</reference>
<keyword id="KW-0446">Lipid-binding</keyword>
<keyword id="KW-1185">Reference proteome</keyword>
<evidence type="ECO:0000250" key="1"/>
<evidence type="ECO:0000250" key="2">
    <source>
        <dbReference type="UniProtKB" id="Q9X1H9"/>
    </source>
</evidence>
<evidence type="ECO:0000255" key="3">
    <source>
        <dbReference type="PROSITE-ProRule" id="PRU00815"/>
    </source>
</evidence>
<gene>
    <name type="ordered locus">SPy_0865</name>
    <name type="ordered locus">M5005_Spy0672</name>
</gene>
<protein>
    <recommendedName>
        <fullName>DegV domain-containing protein SPy_0865/M5005_Spy0672</fullName>
    </recommendedName>
</protein>
<name>Y865_STRP1</name>
<dbReference type="EMBL" id="AE004092">
    <property type="protein sequence ID" value="AAK33788.1"/>
    <property type="molecule type" value="Genomic_DNA"/>
</dbReference>
<dbReference type="EMBL" id="CP000017">
    <property type="protein sequence ID" value="AAZ51290.1"/>
    <property type="molecule type" value="Genomic_DNA"/>
</dbReference>
<dbReference type="RefSeq" id="NP_269067.1">
    <property type="nucleotide sequence ID" value="NC_002737.2"/>
</dbReference>
<dbReference type="SMR" id="Q9A0A6"/>
<dbReference type="PaxDb" id="1314-HKU360_00682"/>
<dbReference type="KEGG" id="spy:SPy_0865"/>
<dbReference type="KEGG" id="spz:M5005_Spy0672"/>
<dbReference type="PATRIC" id="fig|160490.10.peg.742"/>
<dbReference type="HOGENOM" id="CLU_048251_3_1_9"/>
<dbReference type="OMA" id="VYPFDSE"/>
<dbReference type="Proteomes" id="UP000000750">
    <property type="component" value="Chromosome"/>
</dbReference>
<dbReference type="GO" id="GO:0008289">
    <property type="term" value="F:lipid binding"/>
    <property type="evidence" value="ECO:0007669"/>
    <property type="project" value="UniProtKB-KW"/>
</dbReference>
<dbReference type="Gene3D" id="3.30.1180.10">
    <property type="match status" value="1"/>
</dbReference>
<dbReference type="Gene3D" id="3.40.50.10170">
    <property type="match status" value="1"/>
</dbReference>
<dbReference type="InterPro" id="IPR003797">
    <property type="entry name" value="DegV"/>
</dbReference>
<dbReference type="InterPro" id="IPR043168">
    <property type="entry name" value="DegV_C"/>
</dbReference>
<dbReference type="InterPro" id="IPR050270">
    <property type="entry name" value="DegV_domain_contain"/>
</dbReference>
<dbReference type="NCBIfam" id="TIGR00762">
    <property type="entry name" value="DegV"/>
    <property type="match status" value="1"/>
</dbReference>
<dbReference type="PANTHER" id="PTHR33434">
    <property type="entry name" value="DEGV DOMAIN-CONTAINING PROTEIN DR_1986-RELATED"/>
    <property type="match status" value="1"/>
</dbReference>
<dbReference type="PANTHER" id="PTHR33434:SF2">
    <property type="entry name" value="FATTY ACID-BINDING PROTEIN TM_1468"/>
    <property type="match status" value="1"/>
</dbReference>
<dbReference type="Pfam" id="PF02645">
    <property type="entry name" value="DegV"/>
    <property type="match status" value="1"/>
</dbReference>
<dbReference type="SUPFAM" id="SSF82549">
    <property type="entry name" value="DAK1/DegV-like"/>
    <property type="match status" value="1"/>
</dbReference>
<dbReference type="PROSITE" id="PS51482">
    <property type="entry name" value="DEGV"/>
    <property type="match status" value="1"/>
</dbReference>
<feature type="chain" id="PRO_0000209800" description="DegV domain-containing protein SPy_0865/M5005_Spy0672">
    <location>
        <begin position="1"/>
        <end position="282"/>
    </location>
</feature>
<feature type="domain" description="DegV" evidence="3">
    <location>
        <begin position="3"/>
        <end position="280"/>
    </location>
</feature>
<feature type="binding site" evidence="2">
    <location>
        <position position="61"/>
    </location>
    <ligand>
        <name>hexadecanoate</name>
        <dbReference type="ChEBI" id="CHEBI:7896"/>
    </ligand>
</feature>
<feature type="binding site" evidence="2">
    <location>
        <position position="94"/>
    </location>
    <ligand>
        <name>hexadecanoate</name>
        <dbReference type="ChEBI" id="CHEBI:7896"/>
    </ligand>
</feature>
<proteinExistence type="inferred from homology"/>
<accession>Q9A0A6</accession>
<accession>Q48ZC8</accession>
<sequence length="282" mass="31338">MKLAVITDSTATLPTDLKQDKAIFSLDIPVIIDDETYFEGRNLSIDDFYQKMADSQNLPKTSQPSLSELDNLLGLLSSKGYTHVIGLFLAGGISGFWQNIQFLAEEHPEIEMAFPDSKITSAPLGSMVKNVLDWSRQGMTFQAILNKLQEQIDGTTAFIMVDDLNHLVKGGRLSNGSALLGNLLSIKPILRFDEEGKIVVYEKVRTEKKAMKRLVEILNDLIADGQYNVFIIHSKAQDKADYLKRLLQDSGYQYDIEEVHFGAVIATHLGEGAIAFGVTPRL</sequence>